<keyword id="KW-1003">Cell membrane</keyword>
<keyword id="KW-0472">Membrane</keyword>
<keyword id="KW-0762">Sugar transport</keyword>
<keyword id="KW-0812">Transmembrane</keyword>
<keyword id="KW-1133">Transmembrane helix</keyword>
<keyword id="KW-0813">Transport</keyword>
<feature type="chain" id="PRO_0000213639" description="Putative ribose uptake protein RbsU">
    <location>
        <begin position="1"/>
        <end position="293"/>
    </location>
</feature>
<feature type="transmembrane region" description="Helical" evidence="2">
    <location>
        <begin position="2"/>
        <end position="24"/>
    </location>
</feature>
<feature type="transmembrane region" description="Helical" evidence="2">
    <location>
        <begin position="34"/>
        <end position="56"/>
    </location>
</feature>
<feature type="transmembrane region" description="Helical" evidence="2">
    <location>
        <begin position="63"/>
        <end position="80"/>
    </location>
</feature>
<feature type="transmembrane region" description="Helical" evidence="2">
    <location>
        <begin position="95"/>
        <end position="117"/>
    </location>
</feature>
<feature type="transmembrane region" description="Helical" evidence="2">
    <location>
        <begin position="122"/>
        <end position="139"/>
    </location>
</feature>
<feature type="transmembrane region" description="Helical" evidence="2">
    <location>
        <begin position="154"/>
        <end position="171"/>
    </location>
</feature>
<feature type="transmembrane region" description="Helical" evidence="2">
    <location>
        <begin position="180"/>
        <end position="202"/>
    </location>
</feature>
<feature type="transmembrane region" description="Helical" evidence="2">
    <location>
        <begin position="212"/>
        <end position="234"/>
    </location>
</feature>
<feature type="transmembrane region" description="Helical" evidence="2">
    <location>
        <begin position="241"/>
        <end position="263"/>
    </location>
</feature>
<feature type="transmembrane region" description="Helical" evidence="2">
    <location>
        <begin position="273"/>
        <end position="292"/>
    </location>
</feature>
<reference key="1">
    <citation type="journal article" date="2001" name="Lancet">
        <title>Whole genome sequencing of meticillin-resistant Staphylococcus aureus.</title>
        <authorList>
            <person name="Kuroda M."/>
            <person name="Ohta T."/>
            <person name="Uchiyama I."/>
            <person name="Baba T."/>
            <person name="Yuzawa H."/>
            <person name="Kobayashi I."/>
            <person name="Cui L."/>
            <person name="Oguchi A."/>
            <person name="Aoki K."/>
            <person name="Nagai Y."/>
            <person name="Lian J.-Q."/>
            <person name="Ito T."/>
            <person name="Kanamori M."/>
            <person name="Matsumaru H."/>
            <person name="Maruyama A."/>
            <person name="Murakami H."/>
            <person name="Hosoyama A."/>
            <person name="Mizutani-Ui Y."/>
            <person name="Takahashi N.K."/>
            <person name="Sawano T."/>
            <person name="Inoue R."/>
            <person name="Kaito C."/>
            <person name="Sekimizu K."/>
            <person name="Hirakawa H."/>
            <person name="Kuhara S."/>
            <person name="Goto S."/>
            <person name="Yabuzaki J."/>
            <person name="Kanehisa M."/>
            <person name="Yamashita A."/>
            <person name="Oshima K."/>
            <person name="Furuya K."/>
            <person name="Yoshino C."/>
            <person name="Shiba T."/>
            <person name="Hattori M."/>
            <person name="Ogasawara N."/>
            <person name="Hayashi H."/>
            <person name="Hiramatsu K."/>
        </authorList>
    </citation>
    <scope>NUCLEOTIDE SEQUENCE [LARGE SCALE GENOMIC DNA]</scope>
    <source>
        <strain>N315</strain>
    </source>
</reference>
<name>RBSU_STAAN</name>
<comment type="function">
    <text evidence="1">Could be involved in the uptake of ribose.</text>
</comment>
<comment type="subcellular location">
    <subcellularLocation>
        <location evidence="3">Cell membrane</location>
        <topology evidence="3">Multi-pass membrane protein</topology>
    </subcellularLocation>
</comment>
<comment type="similarity">
    <text evidence="3">Belongs to the GRP transporter (TC 2.A.7.5) family.</text>
</comment>
<evidence type="ECO:0000250" key="1"/>
<evidence type="ECO:0000255" key="2"/>
<evidence type="ECO:0000305" key="3"/>
<accession>P60947</accession>
<accession>Q99WV5</accession>
<dbReference type="EMBL" id="BA000018">
    <property type="protein sequence ID" value="BAB41484.1"/>
    <property type="molecule type" value="Genomic_DNA"/>
</dbReference>
<dbReference type="PIR" id="A89791">
    <property type="entry name" value="A89791"/>
</dbReference>
<dbReference type="RefSeq" id="WP_000029196.1">
    <property type="nucleotide sequence ID" value="NC_002745.2"/>
</dbReference>
<dbReference type="EnsemblBacteria" id="BAB41484">
    <property type="protein sequence ID" value="BAB41484"/>
    <property type="gene ID" value="BAB41484"/>
</dbReference>
<dbReference type="KEGG" id="sau:SA0260"/>
<dbReference type="HOGENOM" id="CLU_076024_0_1_9"/>
<dbReference type="GO" id="GO:0005886">
    <property type="term" value="C:plasma membrane"/>
    <property type="evidence" value="ECO:0007669"/>
    <property type="project" value="UniProtKB-SubCell"/>
</dbReference>
<dbReference type="GO" id="GO:0015144">
    <property type="term" value="F:carbohydrate transmembrane transporter activity"/>
    <property type="evidence" value="ECO:0007669"/>
    <property type="project" value="InterPro"/>
</dbReference>
<dbReference type="CDD" id="cd23111">
    <property type="entry name" value="ribose_uptake_RbsU"/>
    <property type="match status" value="1"/>
</dbReference>
<dbReference type="InterPro" id="IPR010651">
    <property type="entry name" value="Sugar_transport"/>
</dbReference>
<dbReference type="NCBIfam" id="NF047342">
    <property type="entry name" value="symport_RbsU"/>
    <property type="match status" value="1"/>
</dbReference>
<dbReference type="PANTHER" id="PTHR16119">
    <property type="entry name" value="TRANSMEMBRANE PROTEIN 144"/>
    <property type="match status" value="1"/>
</dbReference>
<dbReference type="PANTHER" id="PTHR16119:SF17">
    <property type="entry name" value="TRANSMEMBRANE PROTEIN 144"/>
    <property type="match status" value="1"/>
</dbReference>
<dbReference type="Pfam" id="PF06800">
    <property type="entry name" value="Sugar_transport"/>
    <property type="match status" value="1"/>
</dbReference>
<dbReference type="SUPFAM" id="SSF103481">
    <property type="entry name" value="Multidrug resistance efflux transporter EmrE"/>
    <property type="match status" value="1"/>
</dbReference>
<protein>
    <recommendedName>
        <fullName>Putative ribose uptake protein RbsU</fullName>
    </recommendedName>
</protein>
<proteinExistence type="inferred from homology"/>
<sequence>MSIVALLIGLGPLIGWGFFPTVASKFGGKPVHQIIGATVGTLIFAIILAVVTSSGFPTGTNLLFALLSGAGWGFGQIITFKAFELIGSSRAMPVTTAFQLLGASLWGVFALGNWPGIGHKIIGFTALVVILIGARMTVWSERKEASNAKNLRRAVVLLLIGEFGYWLYSAAPQATSIDGLTAFLPQAMGMVIVAVIYGFMNMKSENPFRNKITWLQIISGFFFAFGALTYLISAQPNMNGLATGFILSQTSVVLATLTGIYFLKQHKTSKEMVITIIGLVLILVAASVTVFIK</sequence>
<gene>
    <name type="primary">rbsU</name>
    <name type="ordered locus">SA0260</name>
</gene>
<organism>
    <name type="scientific">Staphylococcus aureus (strain N315)</name>
    <dbReference type="NCBI Taxonomy" id="158879"/>
    <lineage>
        <taxon>Bacteria</taxon>
        <taxon>Bacillati</taxon>
        <taxon>Bacillota</taxon>
        <taxon>Bacilli</taxon>
        <taxon>Bacillales</taxon>
        <taxon>Staphylococcaceae</taxon>
        <taxon>Staphylococcus</taxon>
    </lineage>
</organism>